<evidence type="ECO:0000255" key="1">
    <source>
        <dbReference type="HAMAP-Rule" id="MF_00407"/>
    </source>
</evidence>
<evidence type="ECO:0000269" key="2">
    <source>
    </source>
</evidence>
<evidence type="ECO:0000303" key="3">
    <source>
    </source>
</evidence>
<evidence type="ECO:0000305" key="4"/>
<dbReference type="EC" id="6.5.1.6" evidence="1 2"/>
<dbReference type="EMBL" id="AJ133713">
    <property type="protein sequence ID" value="CAC21199.1"/>
    <property type="molecule type" value="Genomic_DNA"/>
</dbReference>
<dbReference type="SMR" id="Q9HH07"/>
<dbReference type="KEGG" id="ag:CAC21199"/>
<dbReference type="BRENDA" id="6.5.1.6">
    <property type="organism ID" value="6299"/>
</dbReference>
<dbReference type="GO" id="GO:0005524">
    <property type="term" value="F:ATP binding"/>
    <property type="evidence" value="ECO:0007669"/>
    <property type="project" value="UniProtKB-UniRule"/>
</dbReference>
<dbReference type="GO" id="GO:0003677">
    <property type="term" value="F:DNA binding"/>
    <property type="evidence" value="ECO:0007669"/>
    <property type="project" value="InterPro"/>
</dbReference>
<dbReference type="GO" id="GO:0003910">
    <property type="term" value="F:DNA ligase (ATP) activity"/>
    <property type="evidence" value="ECO:0007669"/>
    <property type="project" value="UniProtKB-UniRule"/>
</dbReference>
<dbReference type="GO" id="GO:0046872">
    <property type="term" value="F:metal ion binding"/>
    <property type="evidence" value="ECO:0007669"/>
    <property type="project" value="UniProtKB-KW"/>
</dbReference>
<dbReference type="GO" id="GO:0051301">
    <property type="term" value="P:cell division"/>
    <property type="evidence" value="ECO:0007669"/>
    <property type="project" value="UniProtKB-KW"/>
</dbReference>
<dbReference type="GO" id="GO:0071897">
    <property type="term" value="P:DNA biosynthetic process"/>
    <property type="evidence" value="ECO:0007669"/>
    <property type="project" value="InterPro"/>
</dbReference>
<dbReference type="GO" id="GO:0006310">
    <property type="term" value="P:DNA recombination"/>
    <property type="evidence" value="ECO:0007669"/>
    <property type="project" value="UniProtKB-UniRule"/>
</dbReference>
<dbReference type="GO" id="GO:0006281">
    <property type="term" value="P:DNA repair"/>
    <property type="evidence" value="ECO:0007669"/>
    <property type="project" value="UniProtKB-UniRule"/>
</dbReference>
<dbReference type="GO" id="GO:0006273">
    <property type="term" value="P:lagging strand elongation"/>
    <property type="evidence" value="ECO:0007669"/>
    <property type="project" value="TreeGrafter"/>
</dbReference>
<dbReference type="CDD" id="cd07901">
    <property type="entry name" value="Adenylation_DNA_ligase_Arch_LigB"/>
    <property type="match status" value="1"/>
</dbReference>
<dbReference type="CDD" id="cd07972">
    <property type="entry name" value="OBF_DNA_ligase_Arch_LigB"/>
    <property type="match status" value="1"/>
</dbReference>
<dbReference type="FunFam" id="1.10.3260.10:FF:000007">
    <property type="entry name" value="DNA ligase"/>
    <property type="match status" value="1"/>
</dbReference>
<dbReference type="FunFam" id="2.40.50.140:FF:000163">
    <property type="entry name" value="Probable DNA ligase"/>
    <property type="match status" value="1"/>
</dbReference>
<dbReference type="FunFam" id="3.30.470.30:FF:000012">
    <property type="entry name" value="Probable DNA ligase"/>
    <property type="match status" value="1"/>
</dbReference>
<dbReference type="Gene3D" id="1.10.3260.10">
    <property type="entry name" value="DNA ligase, ATP-dependent, N-terminal domain"/>
    <property type="match status" value="1"/>
</dbReference>
<dbReference type="Gene3D" id="3.30.470.30">
    <property type="entry name" value="DNA ligase/mRNA capping enzyme"/>
    <property type="match status" value="1"/>
</dbReference>
<dbReference type="Gene3D" id="2.40.50.140">
    <property type="entry name" value="Nucleic acid-binding proteins"/>
    <property type="match status" value="1"/>
</dbReference>
<dbReference type="HAMAP" id="MF_00407">
    <property type="entry name" value="DNA_ligase"/>
    <property type="match status" value="1"/>
</dbReference>
<dbReference type="InterPro" id="IPR050191">
    <property type="entry name" value="ATP-dep_DNA_ligase"/>
</dbReference>
<dbReference type="InterPro" id="IPR022865">
    <property type="entry name" value="DNA_ligae_ATP-dep_bac/arc"/>
</dbReference>
<dbReference type="InterPro" id="IPR000977">
    <property type="entry name" value="DNA_ligase_ATP-dep"/>
</dbReference>
<dbReference type="InterPro" id="IPR012309">
    <property type="entry name" value="DNA_ligase_ATP-dep_C"/>
</dbReference>
<dbReference type="InterPro" id="IPR012310">
    <property type="entry name" value="DNA_ligase_ATP-dep_cent"/>
</dbReference>
<dbReference type="InterPro" id="IPR016059">
    <property type="entry name" value="DNA_ligase_ATP-dep_CS"/>
</dbReference>
<dbReference type="InterPro" id="IPR012308">
    <property type="entry name" value="DNA_ligase_ATP-dep_N"/>
</dbReference>
<dbReference type="InterPro" id="IPR036599">
    <property type="entry name" value="DNA_ligase_N_sf"/>
</dbReference>
<dbReference type="InterPro" id="IPR012340">
    <property type="entry name" value="NA-bd_OB-fold"/>
</dbReference>
<dbReference type="NCBIfam" id="TIGR00574">
    <property type="entry name" value="dnl1"/>
    <property type="match status" value="1"/>
</dbReference>
<dbReference type="PANTHER" id="PTHR45674:SF7">
    <property type="entry name" value="DNA LIGASE"/>
    <property type="match status" value="1"/>
</dbReference>
<dbReference type="PANTHER" id="PTHR45674">
    <property type="entry name" value="DNA LIGASE 1/3 FAMILY MEMBER"/>
    <property type="match status" value="1"/>
</dbReference>
<dbReference type="Pfam" id="PF04679">
    <property type="entry name" value="DNA_ligase_A_C"/>
    <property type="match status" value="1"/>
</dbReference>
<dbReference type="Pfam" id="PF01068">
    <property type="entry name" value="DNA_ligase_A_M"/>
    <property type="match status" value="1"/>
</dbReference>
<dbReference type="Pfam" id="PF04675">
    <property type="entry name" value="DNA_ligase_A_N"/>
    <property type="match status" value="1"/>
</dbReference>
<dbReference type="SUPFAM" id="SSF117018">
    <property type="entry name" value="ATP-dependent DNA ligase DNA-binding domain"/>
    <property type="match status" value="1"/>
</dbReference>
<dbReference type="SUPFAM" id="SSF56091">
    <property type="entry name" value="DNA ligase/mRNA capping enzyme, catalytic domain"/>
    <property type="match status" value="1"/>
</dbReference>
<dbReference type="SUPFAM" id="SSF50249">
    <property type="entry name" value="Nucleic acid-binding proteins"/>
    <property type="match status" value="1"/>
</dbReference>
<dbReference type="PROSITE" id="PS00697">
    <property type="entry name" value="DNA_LIGASE_A1"/>
    <property type="match status" value="1"/>
</dbReference>
<dbReference type="PROSITE" id="PS00333">
    <property type="entry name" value="DNA_LIGASE_A2"/>
    <property type="match status" value="1"/>
</dbReference>
<dbReference type="PROSITE" id="PS50160">
    <property type="entry name" value="DNA_LIGASE_A3"/>
    <property type="match status" value="1"/>
</dbReference>
<sequence>MKYSELAGLYRRLEKTTLKTLKTRFVADFLKNVPDELLEIVPYLILGKVFPDWDERELGVGEKLLIKAVSIATGVPEGEIENSIKDTGDLGESIALAVKKKKQKSFFSQPLTIKRVYDTFVKVAESQGEGSQDRKMKYLANLFMDAQPEEAKYIARTVLGTMRTGVAEGILRDAIAEAFKVKAELVERAYMLTSDFGYVTKVAKLEGNEGLSKVRIQVGKPVRPMLAQNAASVKDALLEMGGEAAFEIKYDGARVQVHKDGDRVVIYSRRLENVTRSIPEIVEAVRSQLRPEKAIVEGELVAVGDGGKPRPFQYVLRRFRRKYNIEEMIERIPLELNLFDVLYVDGESLVDTPFMERRKRLEEAVEESERIKLAQQLVTKKAEEAEEFYRRALELGHEGLMAKRLDSVYEPGNRGKKWLKIKPTMEDLDLVIIGAEWGEGRRAHLLGSFLVAAYDQHRGEFVPVGKVGSGFTDEDLAEFTKMLKPLIVREEGKYVEIEPRVVIQVTYQEIQKSPKYESGFALRFPRYVALREDKSPEEADTIERISELYGLQERFKAKR</sequence>
<accession>Q9HH07</accession>
<reference key="1">
    <citation type="journal article" date="2004" name="FEMS Microbiol. Lett.">
        <title>Characterization of a thermophilic DNA ligase from the archaeon Thermococcus fumicolans.</title>
        <authorList>
            <person name="Rolland J.-L."/>
            <person name="Gueguen Y."/>
            <person name="Persillon C."/>
            <person name="Masson J.-M."/>
            <person name="Dietrich J."/>
        </authorList>
    </citation>
    <scope>NUCLEOTIDE SEQUENCE [GENOMIC DNA]</scope>
    <scope>FUNCTION</scope>
    <scope>CATALYTIC ACTIVITY</scope>
    <scope>COFACTOR</scope>
    <scope>BIOPHYSICOCHEMICAL PROPERTIES</scope>
</reference>
<keyword id="KW-0067">ATP-binding</keyword>
<keyword id="KW-0131">Cell cycle</keyword>
<keyword id="KW-0132">Cell division</keyword>
<keyword id="KW-0227">DNA damage</keyword>
<keyword id="KW-0233">DNA recombination</keyword>
<keyword id="KW-0234">DNA repair</keyword>
<keyword id="KW-0235">DNA replication</keyword>
<keyword id="KW-0436">Ligase</keyword>
<keyword id="KW-0460">Magnesium</keyword>
<keyword id="KW-0479">Metal-binding</keyword>
<keyword id="KW-0520">NAD</keyword>
<keyword id="KW-0547">Nucleotide-binding</keyword>
<name>DNLI_THEFM</name>
<feature type="chain" id="PRO_0000059621" description="DNA ligase">
    <location>
        <begin position="1"/>
        <end position="559"/>
    </location>
</feature>
<feature type="active site" description="N6-AMP-lysine intermediate" evidence="1">
    <location>
        <position position="249"/>
    </location>
</feature>
<feature type="binding site" evidence="1">
    <location>
        <position position="247"/>
    </location>
    <ligand>
        <name>ATP</name>
        <dbReference type="ChEBI" id="CHEBI:30616"/>
    </ligand>
</feature>
<feature type="binding site" evidence="1">
    <location>
        <position position="254"/>
    </location>
    <ligand>
        <name>ATP</name>
        <dbReference type="ChEBI" id="CHEBI:30616"/>
    </ligand>
</feature>
<feature type="binding site" evidence="1">
    <location>
        <position position="269"/>
    </location>
    <ligand>
        <name>ATP</name>
        <dbReference type="ChEBI" id="CHEBI:30616"/>
    </ligand>
</feature>
<feature type="binding site" evidence="1">
    <location>
        <position position="299"/>
    </location>
    <ligand>
        <name>ATP</name>
        <dbReference type="ChEBI" id="CHEBI:30616"/>
    </ligand>
</feature>
<feature type="binding site" evidence="1">
    <location>
        <position position="339"/>
    </location>
    <ligand>
        <name>ATP</name>
        <dbReference type="ChEBI" id="CHEBI:30616"/>
    </ligand>
</feature>
<feature type="binding site" evidence="1">
    <location>
        <position position="414"/>
    </location>
    <ligand>
        <name>ATP</name>
        <dbReference type="ChEBI" id="CHEBI:30616"/>
    </ligand>
</feature>
<feature type="binding site" evidence="1">
    <location>
        <position position="420"/>
    </location>
    <ligand>
        <name>ATP</name>
        <dbReference type="ChEBI" id="CHEBI:30616"/>
    </ligand>
</feature>
<comment type="function">
    <text evidence="2">DNA ligase that seals nicks in double-stranded DNA during DNA replication, DNA recombination and DNA repair. Shows high activity with either ATP or NAD(+).</text>
</comment>
<comment type="catalytic activity">
    <reaction evidence="1 2">
        <text>ATP + (deoxyribonucleotide)n-3'-hydroxyl + 5'-phospho-(deoxyribonucleotide)m = (deoxyribonucleotide)n+m + AMP + diphosphate.</text>
        <dbReference type="EC" id="6.5.1.6"/>
    </reaction>
</comment>
<comment type="catalytic activity">
    <reaction evidence="1 2">
        <text>NAD(+) + (deoxyribonucleotide)n-3'-hydroxyl + 5'-phospho-(deoxyribonucleotide)m = (deoxyribonucleotide)n+m + AMP + beta-nicotinamide D-nucleotide.</text>
        <dbReference type="EC" id="6.5.1.6"/>
    </reaction>
</comment>
<comment type="cofactor">
    <cofactor evidence="1 2">
        <name>Mg(2+)</name>
        <dbReference type="ChEBI" id="CHEBI:18420"/>
    </cofactor>
</comment>
<comment type="biophysicochemical properties">
    <kinetics>
        <KM evidence="2">1160 uM for ATP</KM>
        <KM evidence="2">690 uM for NAD(+)</KM>
    </kinetics>
    <phDependence>
        <text evidence="2">Optimum pH is 7.0.</text>
    </phDependence>
    <temperatureDependence>
        <text evidence="2">Optimum temperature is 65 degrees Celsius. Loses half of its activity in 15 minutes at 90 degrees Celsius.</text>
    </temperatureDependence>
</comment>
<comment type="similarity">
    <text evidence="1 4">Belongs to the ATP-dependent DNA ligase family.</text>
</comment>
<proteinExistence type="evidence at protein level"/>
<protein>
    <recommendedName>
        <fullName evidence="1 3">DNA ligase</fullName>
        <ecNumber evidence="1 2">6.5.1.6</ecNumber>
    </recommendedName>
    <alternativeName>
        <fullName evidence="1 4">Polydeoxyribonucleotide synthase [ATP/NAD(+)]</fullName>
    </alternativeName>
</protein>
<organism>
    <name type="scientific">Thermococcus fumicolans</name>
    <dbReference type="NCBI Taxonomy" id="46540"/>
    <lineage>
        <taxon>Archaea</taxon>
        <taxon>Methanobacteriati</taxon>
        <taxon>Methanobacteriota</taxon>
        <taxon>Thermococci</taxon>
        <taxon>Thermococcales</taxon>
        <taxon>Thermococcaceae</taxon>
        <taxon>Thermococcus</taxon>
    </lineage>
</organism>
<gene>
    <name evidence="1" type="primary">lig</name>
</gene>